<sequence length="228" mass="26347">MRELNELKHLAIIMDGNGRWAQERGKQRVRGHEKGAETIREITMFCSKSDISFLTLYAFSTENWKRPKTEVDFLMRLLSDYLKKEAEVYLKNNIRFKAIGDLSRFSSRLLDEIETLTQKSASCSGLTQVLALNYGSKDEIIRATQKMIEAGVEVSEENLSRFLDTAFAPDVDMLVRTGGDYRLSNYLLWQSSYAELFFTPTLWPDFTAGELAIQIEEFKRRKRRFGGI</sequence>
<evidence type="ECO:0000255" key="1">
    <source>
        <dbReference type="HAMAP-Rule" id="MF_01139"/>
    </source>
</evidence>
<dbReference type="EC" id="2.5.1.-" evidence="1"/>
<dbReference type="EMBL" id="BX571662">
    <property type="protein sequence ID" value="CAE11058.1"/>
    <property type="molecule type" value="Genomic_DNA"/>
</dbReference>
<dbReference type="RefSeq" id="WP_011139840.1">
    <property type="nucleotide sequence ID" value="NC_005090.1"/>
</dbReference>
<dbReference type="SMR" id="Q7M7V7"/>
<dbReference type="STRING" id="273121.WS2058"/>
<dbReference type="KEGG" id="wsu:WS2058"/>
<dbReference type="eggNOG" id="COG0020">
    <property type="taxonomic scope" value="Bacteria"/>
</dbReference>
<dbReference type="HOGENOM" id="CLU_038505_1_1_7"/>
<dbReference type="Proteomes" id="UP000000422">
    <property type="component" value="Chromosome"/>
</dbReference>
<dbReference type="GO" id="GO:0005829">
    <property type="term" value="C:cytosol"/>
    <property type="evidence" value="ECO:0007669"/>
    <property type="project" value="TreeGrafter"/>
</dbReference>
<dbReference type="GO" id="GO:0008834">
    <property type="term" value="F:ditrans,polycis-undecaprenyl-diphosphate synthase [(2E,6E)-farnesyl-diphosphate specific] activity"/>
    <property type="evidence" value="ECO:0007669"/>
    <property type="project" value="TreeGrafter"/>
</dbReference>
<dbReference type="GO" id="GO:0000287">
    <property type="term" value="F:magnesium ion binding"/>
    <property type="evidence" value="ECO:0007669"/>
    <property type="project" value="UniProtKB-UniRule"/>
</dbReference>
<dbReference type="GO" id="GO:0016094">
    <property type="term" value="P:polyprenol biosynthetic process"/>
    <property type="evidence" value="ECO:0007669"/>
    <property type="project" value="TreeGrafter"/>
</dbReference>
<dbReference type="CDD" id="cd00475">
    <property type="entry name" value="Cis_IPPS"/>
    <property type="match status" value="1"/>
</dbReference>
<dbReference type="FunFam" id="3.40.1180.10:FF:000001">
    <property type="entry name" value="(2E,6E)-farnesyl-diphosphate-specific ditrans,polycis-undecaprenyl-diphosphate synthase"/>
    <property type="match status" value="1"/>
</dbReference>
<dbReference type="Gene3D" id="3.40.1180.10">
    <property type="entry name" value="Decaprenyl diphosphate synthase-like"/>
    <property type="match status" value="1"/>
</dbReference>
<dbReference type="HAMAP" id="MF_01139">
    <property type="entry name" value="ISPT"/>
    <property type="match status" value="1"/>
</dbReference>
<dbReference type="InterPro" id="IPR001441">
    <property type="entry name" value="UPP_synth-like"/>
</dbReference>
<dbReference type="InterPro" id="IPR018520">
    <property type="entry name" value="UPP_synth-like_CS"/>
</dbReference>
<dbReference type="InterPro" id="IPR036424">
    <property type="entry name" value="UPP_synth-like_sf"/>
</dbReference>
<dbReference type="NCBIfam" id="NF011407">
    <property type="entry name" value="PRK14833.1"/>
    <property type="match status" value="1"/>
</dbReference>
<dbReference type="NCBIfam" id="TIGR00055">
    <property type="entry name" value="uppS"/>
    <property type="match status" value="1"/>
</dbReference>
<dbReference type="PANTHER" id="PTHR10291:SF0">
    <property type="entry name" value="DEHYDRODOLICHYL DIPHOSPHATE SYNTHASE 2"/>
    <property type="match status" value="1"/>
</dbReference>
<dbReference type="PANTHER" id="PTHR10291">
    <property type="entry name" value="DEHYDRODOLICHYL DIPHOSPHATE SYNTHASE FAMILY MEMBER"/>
    <property type="match status" value="1"/>
</dbReference>
<dbReference type="Pfam" id="PF01255">
    <property type="entry name" value="Prenyltransf"/>
    <property type="match status" value="1"/>
</dbReference>
<dbReference type="SUPFAM" id="SSF64005">
    <property type="entry name" value="Undecaprenyl diphosphate synthase"/>
    <property type="match status" value="1"/>
</dbReference>
<dbReference type="PROSITE" id="PS01066">
    <property type="entry name" value="UPP_SYNTHASE"/>
    <property type="match status" value="1"/>
</dbReference>
<organism>
    <name type="scientific">Wolinella succinogenes (strain ATCC 29543 / DSM 1740 / CCUG 13145 / JCM 31913 / LMG 7466 / NCTC 11488 / FDC 602W)</name>
    <name type="common">Vibrio succinogenes</name>
    <dbReference type="NCBI Taxonomy" id="273121"/>
    <lineage>
        <taxon>Bacteria</taxon>
        <taxon>Pseudomonadati</taxon>
        <taxon>Campylobacterota</taxon>
        <taxon>Epsilonproteobacteria</taxon>
        <taxon>Campylobacterales</taxon>
        <taxon>Helicobacteraceae</taxon>
        <taxon>Wolinella</taxon>
    </lineage>
</organism>
<protein>
    <recommendedName>
        <fullName evidence="1">Isoprenyl transferase</fullName>
        <ecNumber evidence="1">2.5.1.-</ecNumber>
    </recommendedName>
</protein>
<accession>Q7M7V7</accession>
<feature type="chain" id="PRO_0000123717" description="Isoprenyl transferase">
    <location>
        <begin position="1"/>
        <end position="228"/>
    </location>
</feature>
<feature type="active site" evidence="1">
    <location>
        <position position="15"/>
    </location>
</feature>
<feature type="active site" description="Proton acceptor" evidence="1">
    <location>
        <position position="63"/>
    </location>
</feature>
<feature type="binding site" evidence="1">
    <location>
        <position position="15"/>
    </location>
    <ligand>
        <name>Mg(2+)</name>
        <dbReference type="ChEBI" id="CHEBI:18420"/>
    </ligand>
</feature>
<feature type="binding site" evidence="1">
    <location>
        <begin position="16"/>
        <end position="19"/>
    </location>
    <ligand>
        <name>substrate</name>
    </ligand>
</feature>
<feature type="binding site" evidence="1">
    <location>
        <position position="20"/>
    </location>
    <ligand>
        <name>substrate</name>
    </ligand>
</feature>
<feature type="binding site" evidence="1">
    <location>
        <position position="28"/>
    </location>
    <ligand>
        <name>substrate</name>
    </ligand>
</feature>
<feature type="binding site" evidence="1">
    <location>
        <position position="32"/>
    </location>
    <ligand>
        <name>substrate</name>
    </ligand>
</feature>
<feature type="binding site" evidence="1">
    <location>
        <begin position="60"/>
        <end position="62"/>
    </location>
    <ligand>
        <name>substrate</name>
    </ligand>
</feature>
<feature type="binding site" evidence="1">
    <location>
        <position position="64"/>
    </location>
    <ligand>
        <name>substrate</name>
    </ligand>
</feature>
<feature type="binding site" evidence="1">
    <location>
        <position position="66"/>
    </location>
    <ligand>
        <name>substrate</name>
    </ligand>
</feature>
<feature type="binding site" evidence="1">
    <location>
        <position position="176"/>
    </location>
    <ligand>
        <name>substrate</name>
    </ligand>
</feature>
<feature type="binding site" evidence="1">
    <location>
        <begin position="182"/>
        <end position="184"/>
    </location>
    <ligand>
        <name>substrate</name>
    </ligand>
</feature>
<feature type="binding site" evidence="1">
    <location>
        <position position="195"/>
    </location>
    <ligand>
        <name>Mg(2+)</name>
        <dbReference type="ChEBI" id="CHEBI:18420"/>
    </ligand>
</feature>
<reference key="1">
    <citation type="journal article" date="2003" name="Proc. Natl. Acad. Sci. U.S.A.">
        <title>Complete genome sequence and analysis of Wolinella succinogenes.</title>
        <authorList>
            <person name="Baar C."/>
            <person name="Eppinger M."/>
            <person name="Raddatz G."/>
            <person name="Simon J."/>
            <person name="Lanz C."/>
            <person name="Klimmek O."/>
            <person name="Nandakumar R."/>
            <person name="Gross R."/>
            <person name="Rosinus A."/>
            <person name="Keller H."/>
            <person name="Jagtap P."/>
            <person name="Linke B."/>
            <person name="Meyer F."/>
            <person name="Lederer H."/>
            <person name="Schuster S.C."/>
        </authorList>
    </citation>
    <scope>NUCLEOTIDE SEQUENCE [LARGE SCALE GENOMIC DNA]</scope>
    <source>
        <strain>ATCC 29543 / DSM 1740 / CCUG 13145 / JCM 31913 / LMG 7466 / NCTC 11488 / FDC 602W</strain>
    </source>
</reference>
<name>ISPT_WOLSU</name>
<gene>
    <name evidence="1" type="primary">uppS</name>
    <name type="ordered locus">WS2058</name>
</gene>
<proteinExistence type="inferred from homology"/>
<comment type="function">
    <text evidence="1">Catalyzes the condensation of isopentenyl diphosphate (IPP) with allylic pyrophosphates generating different type of terpenoids.</text>
</comment>
<comment type="cofactor">
    <cofactor evidence="1">
        <name>Mg(2+)</name>
        <dbReference type="ChEBI" id="CHEBI:18420"/>
    </cofactor>
    <text evidence="1">Binds 2 magnesium ions per subunit.</text>
</comment>
<comment type="subunit">
    <text evidence="1">Homodimer.</text>
</comment>
<comment type="similarity">
    <text evidence="1">Belongs to the UPP synthase family.</text>
</comment>
<keyword id="KW-0460">Magnesium</keyword>
<keyword id="KW-0479">Metal-binding</keyword>
<keyword id="KW-1185">Reference proteome</keyword>
<keyword id="KW-0808">Transferase</keyword>